<reference key="1">
    <citation type="submission" date="2005-08" db="EMBL/GenBank/DDBJ databases">
        <title>Complete sequence of chromosome 1 of Nitrosospira multiformis ATCC 25196.</title>
        <authorList>
            <person name="Copeland A."/>
            <person name="Lucas S."/>
            <person name="Lapidus A."/>
            <person name="Barry K."/>
            <person name="Detter J.C."/>
            <person name="Glavina T."/>
            <person name="Hammon N."/>
            <person name="Israni S."/>
            <person name="Pitluck S."/>
            <person name="Chain P."/>
            <person name="Malfatti S."/>
            <person name="Shin M."/>
            <person name="Vergez L."/>
            <person name="Schmutz J."/>
            <person name="Larimer F."/>
            <person name="Land M."/>
            <person name="Hauser L."/>
            <person name="Kyrpides N."/>
            <person name="Lykidis A."/>
            <person name="Richardson P."/>
        </authorList>
    </citation>
    <scope>NUCLEOTIDE SEQUENCE [LARGE SCALE GENOMIC DNA]</scope>
    <source>
        <strain>ATCC 25196 / NCIMB 11849 / C 71</strain>
    </source>
</reference>
<accession>Q2YAX9</accession>
<organism>
    <name type="scientific">Nitrosospira multiformis (strain ATCC 25196 / NCIMB 11849 / C 71)</name>
    <dbReference type="NCBI Taxonomy" id="323848"/>
    <lineage>
        <taxon>Bacteria</taxon>
        <taxon>Pseudomonadati</taxon>
        <taxon>Pseudomonadota</taxon>
        <taxon>Betaproteobacteria</taxon>
        <taxon>Nitrosomonadales</taxon>
        <taxon>Nitrosomonadaceae</taxon>
        <taxon>Nitrosospira</taxon>
    </lineage>
</organism>
<evidence type="ECO:0000255" key="1">
    <source>
        <dbReference type="HAMAP-Rule" id="MF_01371"/>
    </source>
</evidence>
<evidence type="ECO:0000305" key="2"/>
<name>RL30_NITMU</name>
<keyword id="KW-1185">Reference proteome</keyword>
<keyword id="KW-0687">Ribonucleoprotein</keyword>
<keyword id="KW-0689">Ribosomal protein</keyword>
<sequence>MTQNPKKIKVTLVKSLIGTKQAHRATARGLGLRHVNSSVEVEDTPAVRGMINNIYYLVKSEV</sequence>
<protein>
    <recommendedName>
        <fullName evidence="1">Large ribosomal subunit protein uL30</fullName>
    </recommendedName>
    <alternativeName>
        <fullName evidence="2">50S ribosomal protein L30</fullName>
    </alternativeName>
</protein>
<feature type="chain" id="PRO_0000273816" description="Large ribosomal subunit protein uL30">
    <location>
        <begin position="1"/>
        <end position="62"/>
    </location>
</feature>
<gene>
    <name evidence="1" type="primary">rpmD</name>
    <name type="ordered locus">Nmul_A0785</name>
</gene>
<dbReference type="EMBL" id="CP000103">
    <property type="protein sequence ID" value="ABB74092.1"/>
    <property type="molecule type" value="Genomic_DNA"/>
</dbReference>
<dbReference type="RefSeq" id="WP_011380141.1">
    <property type="nucleotide sequence ID" value="NC_007614.1"/>
</dbReference>
<dbReference type="SMR" id="Q2YAX9"/>
<dbReference type="STRING" id="323848.Nmul_A0785"/>
<dbReference type="KEGG" id="nmu:Nmul_A0785"/>
<dbReference type="eggNOG" id="COG1841">
    <property type="taxonomic scope" value="Bacteria"/>
</dbReference>
<dbReference type="HOGENOM" id="CLU_131047_1_4_4"/>
<dbReference type="OrthoDB" id="9812790at2"/>
<dbReference type="Proteomes" id="UP000002718">
    <property type="component" value="Chromosome"/>
</dbReference>
<dbReference type="GO" id="GO:0022625">
    <property type="term" value="C:cytosolic large ribosomal subunit"/>
    <property type="evidence" value="ECO:0007669"/>
    <property type="project" value="TreeGrafter"/>
</dbReference>
<dbReference type="GO" id="GO:0003735">
    <property type="term" value="F:structural constituent of ribosome"/>
    <property type="evidence" value="ECO:0007669"/>
    <property type="project" value="InterPro"/>
</dbReference>
<dbReference type="GO" id="GO:0006412">
    <property type="term" value="P:translation"/>
    <property type="evidence" value="ECO:0007669"/>
    <property type="project" value="UniProtKB-UniRule"/>
</dbReference>
<dbReference type="CDD" id="cd01658">
    <property type="entry name" value="Ribosomal_L30"/>
    <property type="match status" value="1"/>
</dbReference>
<dbReference type="FunFam" id="3.30.1390.20:FF:000001">
    <property type="entry name" value="50S ribosomal protein L30"/>
    <property type="match status" value="1"/>
</dbReference>
<dbReference type="Gene3D" id="3.30.1390.20">
    <property type="entry name" value="Ribosomal protein L30, ferredoxin-like fold domain"/>
    <property type="match status" value="1"/>
</dbReference>
<dbReference type="HAMAP" id="MF_01371_B">
    <property type="entry name" value="Ribosomal_uL30_B"/>
    <property type="match status" value="1"/>
</dbReference>
<dbReference type="InterPro" id="IPR036919">
    <property type="entry name" value="Ribo_uL30_ferredoxin-like_sf"/>
</dbReference>
<dbReference type="InterPro" id="IPR005996">
    <property type="entry name" value="Ribosomal_uL30_bac-type"/>
</dbReference>
<dbReference type="InterPro" id="IPR016082">
    <property type="entry name" value="Ribosomal_uL30_ferredoxin-like"/>
</dbReference>
<dbReference type="NCBIfam" id="TIGR01308">
    <property type="entry name" value="rpmD_bact"/>
    <property type="match status" value="1"/>
</dbReference>
<dbReference type="PANTHER" id="PTHR15892:SF2">
    <property type="entry name" value="LARGE RIBOSOMAL SUBUNIT PROTEIN UL30M"/>
    <property type="match status" value="1"/>
</dbReference>
<dbReference type="PANTHER" id="PTHR15892">
    <property type="entry name" value="MITOCHONDRIAL RIBOSOMAL PROTEIN L30"/>
    <property type="match status" value="1"/>
</dbReference>
<dbReference type="Pfam" id="PF00327">
    <property type="entry name" value="Ribosomal_L30"/>
    <property type="match status" value="1"/>
</dbReference>
<dbReference type="PIRSF" id="PIRSF002211">
    <property type="entry name" value="Ribosomal_L30_bac-type"/>
    <property type="match status" value="1"/>
</dbReference>
<dbReference type="SUPFAM" id="SSF55129">
    <property type="entry name" value="Ribosomal protein L30p/L7e"/>
    <property type="match status" value="1"/>
</dbReference>
<proteinExistence type="inferred from homology"/>
<comment type="subunit">
    <text evidence="1">Part of the 50S ribosomal subunit.</text>
</comment>
<comment type="similarity">
    <text evidence="1">Belongs to the universal ribosomal protein uL30 family.</text>
</comment>